<proteinExistence type="inferred from homology"/>
<organism>
    <name type="scientific">Shewanella baltica (strain OS155 / ATCC BAA-1091)</name>
    <dbReference type="NCBI Taxonomy" id="325240"/>
    <lineage>
        <taxon>Bacteria</taxon>
        <taxon>Pseudomonadati</taxon>
        <taxon>Pseudomonadota</taxon>
        <taxon>Gammaproteobacteria</taxon>
        <taxon>Alteromonadales</taxon>
        <taxon>Shewanellaceae</taxon>
        <taxon>Shewanella</taxon>
    </lineage>
</organism>
<reference key="1">
    <citation type="submission" date="2007-02" db="EMBL/GenBank/DDBJ databases">
        <title>Complete sequence of chromosome of Shewanella baltica OS155.</title>
        <authorList>
            <consortium name="US DOE Joint Genome Institute"/>
            <person name="Copeland A."/>
            <person name="Lucas S."/>
            <person name="Lapidus A."/>
            <person name="Barry K."/>
            <person name="Detter J.C."/>
            <person name="Glavina del Rio T."/>
            <person name="Hammon N."/>
            <person name="Israni S."/>
            <person name="Dalin E."/>
            <person name="Tice H."/>
            <person name="Pitluck S."/>
            <person name="Sims D.R."/>
            <person name="Brettin T."/>
            <person name="Bruce D."/>
            <person name="Han C."/>
            <person name="Tapia R."/>
            <person name="Brainard J."/>
            <person name="Schmutz J."/>
            <person name="Larimer F."/>
            <person name="Land M."/>
            <person name="Hauser L."/>
            <person name="Kyrpides N."/>
            <person name="Mikhailova N."/>
            <person name="Brettar I."/>
            <person name="Klappenbach J."/>
            <person name="Konstantinidis K."/>
            <person name="Rodrigues J."/>
            <person name="Tiedje J."/>
            <person name="Richardson P."/>
        </authorList>
    </citation>
    <scope>NUCLEOTIDE SEQUENCE [LARGE SCALE GENOMIC DNA]</scope>
    <source>
        <strain>OS155 / ATCC BAA-1091</strain>
    </source>
</reference>
<sequence length="387" mass="40590">MKQAVIVDCIRTPMGRSKAGVFRNVRAETLSAELMKGLLLRNPQLDPNLIEDVIWGCVQQTLEQGFNIARNASLLAGIPKTAGAVTVNRLCGSSMDAIHQAARAIMTGMGDTFIIGGVEHMGHVPMSHGVDFHPGLANKVAKASGMMGLTAEMLGKLHGITREQQDAFAVRSHQRAYAATVEGRFAKEIYGIEGHDANGALIKVLQDEVIRPETTMESLAALRPVFDPVNGTVTAGTSSALSDGASAMLIMEESKARALGLPIRARIRSMAVAGCDAAIMGYGPVPATQKALARAGITVADLDVIELNEAFAAQSLPCVKDLGLADVVDDKINLNGGAIALGHPLGCSGARISTTLINLMEDKDATLGLATMCIGLGQGIATVFERV</sequence>
<gene>
    <name evidence="1" type="primary">fadA</name>
    <name type="ordered locus">Sbal_0020</name>
</gene>
<evidence type="ECO:0000255" key="1">
    <source>
        <dbReference type="HAMAP-Rule" id="MF_01620"/>
    </source>
</evidence>
<comment type="function">
    <text evidence="1">Catalyzes the final step of fatty acid oxidation in which acetyl-CoA is released and the CoA ester of a fatty acid two carbons shorter is formed.</text>
</comment>
<comment type="catalytic activity">
    <reaction evidence="1">
        <text>an acyl-CoA + acetyl-CoA = a 3-oxoacyl-CoA + CoA</text>
        <dbReference type="Rhea" id="RHEA:21564"/>
        <dbReference type="ChEBI" id="CHEBI:57287"/>
        <dbReference type="ChEBI" id="CHEBI:57288"/>
        <dbReference type="ChEBI" id="CHEBI:58342"/>
        <dbReference type="ChEBI" id="CHEBI:90726"/>
        <dbReference type="EC" id="2.3.1.16"/>
    </reaction>
</comment>
<comment type="pathway">
    <text evidence="1">Lipid metabolism; fatty acid beta-oxidation.</text>
</comment>
<comment type="subunit">
    <text evidence="1">Heterotetramer of two alpha chains (FadB) and two beta chains (FadA).</text>
</comment>
<comment type="subcellular location">
    <subcellularLocation>
        <location evidence="1">Cytoplasm</location>
    </subcellularLocation>
</comment>
<comment type="similarity">
    <text evidence="1">Belongs to the thiolase-like superfamily. Thiolase family.</text>
</comment>
<dbReference type="EC" id="2.3.1.16" evidence="1"/>
<dbReference type="EMBL" id="CP000563">
    <property type="protein sequence ID" value="ABN59556.1"/>
    <property type="molecule type" value="Genomic_DNA"/>
</dbReference>
<dbReference type="RefSeq" id="WP_011845346.1">
    <property type="nucleotide sequence ID" value="NC_009052.1"/>
</dbReference>
<dbReference type="SMR" id="A3CYJ3"/>
<dbReference type="STRING" id="325240.Sbal_0020"/>
<dbReference type="KEGG" id="sbl:Sbal_0020"/>
<dbReference type="HOGENOM" id="CLU_031026_2_3_6"/>
<dbReference type="OrthoDB" id="8951704at2"/>
<dbReference type="UniPathway" id="UPA00659"/>
<dbReference type="Proteomes" id="UP000001557">
    <property type="component" value="Chromosome"/>
</dbReference>
<dbReference type="GO" id="GO:0005737">
    <property type="term" value="C:cytoplasm"/>
    <property type="evidence" value="ECO:0007669"/>
    <property type="project" value="UniProtKB-SubCell"/>
</dbReference>
<dbReference type="GO" id="GO:0003988">
    <property type="term" value="F:acetyl-CoA C-acyltransferase activity"/>
    <property type="evidence" value="ECO:0007669"/>
    <property type="project" value="UniProtKB-UniRule"/>
</dbReference>
<dbReference type="GO" id="GO:0006635">
    <property type="term" value="P:fatty acid beta-oxidation"/>
    <property type="evidence" value="ECO:0007669"/>
    <property type="project" value="UniProtKB-UniRule"/>
</dbReference>
<dbReference type="GO" id="GO:0010124">
    <property type="term" value="P:phenylacetate catabolic process"/>
    <property type="evidence" value="ECO:0007669"/>
    <property type="project" value="TreeGrafter"/>
</dbReference>
<dbReference type="CDD" id="cd00751">
    <property type="entry name" value="thiolase"/>
    <property type="match status" value="1"/>
</dbReference>
<dbReference type="FunFam" id="3.40.47.10:FF:000010">
    <property type="entry name" value="Acetyl-CoA acetyltransferase (Thiolase)"/>
    <property type="match status" value="1"/>
</dbReference>
<dbReference type="Gene3D" id="3.40.47.10">
    <property type="match status" value="2"/>
</dbReference>
<dbReference type="HAMAP" id="MF_01620">
    <property type="entry name" value="FadA"/>
    <property type="match status" value="1"/>
</dbReference>
<dbReference type="InterPro" id="IPR012805">
    <property type="entry name" value="FadA"/>
</dbReference>
<dbReference type="InterPro" id="IPR002155">
    <property type="entry name" value="Thiolase"/>
</dbReference>
<dbReference type="InterPro" id="IPR016039">
    <property type="entry name" value="Thiolase-like"/>
</dbReference>
<dbReference type="InterPro" id="IPR050215">
    <property type="entry name" value="Thiolase-like_sf_Thiolase"/>
</dbReference>
<dbReference type="InterPro" id="IPR020615">
    <property type="entry name" value="Thiolase_acyl_enz_int_AS"/>
</dbReference>
<dbReference type="InterPro" id="IPR020610">
    <property type="entry name" value="Thiolase_AS"/>
</dbReference>
<dbReference type="InterPro" id="IPR020617">
    <property type="entry name" value="Thiolase_C"/>
</dbReference>
<dbReference type="InterPro" id="IPR020613">
    <property type="entry name" value="Thiolase_CS"/>
</dbReference>
<dbReference type="InterPro" id="IPR020616">
    <property type="entry name" value="Thiolase_N"/>
</dbReference>
<dbReference type="NCBIfam" id="TIGR01930">
    <property type="entry name" value="AcCoA-C-Actrans"/>
    <property type="match status" value="1"/>
</dbReference>
<dbReference type="NCBIfam" id="TIGR02445">
    <property type="entry name" value="fadA"/>
    <property type="match status" value="1"/>
</dbReference>
<dbReference type="NCBIfam" id="NF006510">
    <property type="entry name" value="PRK08947.1"/>
    <property type="match status" value="1"/>
</dbReference>
<dbReference type="PANTHER" id="PTHR43853:SF11">
    <property type="entry name" value="3-KETOACYL-COA THIOLASE FADA"/>
    <property type="match status" value="1"/>
</dbReference>
<dbReference type="PANTHER" id="PTHR43853">
    <property type="entry name" value="3-KETOACYL-COA THIOLASE, PEROXISOMAL"/>
    <property type="match status" value="1"/>
</dbReference>
<dbReference type="Pfam" id="PF02803">
    <property type="entry name" value="Thiolase_C"/>
    <property type="match status" value="1"/>
</dbReference>
<dbReference type="Pfam" id="PF00108">
    <property type="entry name" value="Thiolase_N"/>
    <property type="match status" value="1"/>
</dbReference>
<dbReference type="PIRSF" id="PIRSF000429">
    <property type="entry name" value="Ac-CoA_Ac_transf"/>
    <property type="match status" value="1"/>
</dbReference>
<dbReference type="SUPFAM" id="SSF53901">
    <property type="entry name" value="Thiolase-like"/>
    <property type="match status" value="2"/>
</dbReference>
<dbReference type="PROSITE" id="PS00098">
    <property type="entry name" value="THIOLASE_1"/>
    <property type="match status" value="1"/>
</dbReference>
<dbReference type="PROSITE" id="PS00737">
    <property type="entry name" value="THIOLASE_2"/>
    <property type="match status" value="1"/>
</dbReference>
<dbReference type="PROSITE" id="PS00099">
    <property type="entry name" value="THIOLASE_3"/>
    <property type="match status" value="1"/>
</dbReference>
<keyword id="KW-0012">Acyltransferase</keyword>
<keyword id="KW-0963">Cytoplasm</keyword>
<keyword id="KW-0276">Fatty acid metabolism</keyword>
<keyword id="KW-0442">Lipid degradation</keyword>
<keyword id="KW-0443">Lipid metabolism</keyword>
<keyword id="KW-1185">Reference proteome</keyword>
<keyword id="KW-0808">Transferase</keyword>
<feature type="chain" id="PRO_0000323553" description="3-ketoacyl-CoA thiolase">
    <location>
        <begin position="1"/>
        <end position="387"/>
    </location>
</feature>
<feature type="active site" description="Acyl-thioester intermediate" evidence="1">
    <location>
        <position position="91"/>
    </location>
</feature>
<feature type="active site" description="Proton acceptor" evidence="1">
    <location>
        <position position="343"/>
    </location>
</feature>
<feature type="active site" description="Proton acceptor" evidence="1">
    <location>
        <position position="373"/>
    </location>
</feature>
<name>FADA_SHEB5</name>
<accession>A3CYJ3</accession>
<protein>
    <recommendedName>
        <fullName evidence="1">3-ketoacyl-CoA thiolase</fullName>
        <ecNumber evidence="1">2.3.1.16</ecNumber>
    </recommendedName>
    <alternativeName>
        <fullName evidence="1">Acetyl-CoA acyltransferase</fullName>
    </alternativeName>
    <alternativeName>
        <fullName evidence="1">Beta-ketothiolase</fullName>
    </alternativeName>
    <alternativeName>
        <fullName evidence="1">Fatty acid oxidation complex subunit beta</fullName>
    </alternativeName>
</protein>